<proteinExistence type="inferred from homology"/>
<protein>
    <recommendedName>
        <fullName evidence="1">Probable molybdenum cofactor guanylyltransferase</fullName>
        <shortName evidence="1">MoCo guanylyltransferase</shortName>
        <ecNumber evidence="1">2.7.7.77</ecNumber>
    </recommendedName>
    <alternativeName>
        <fullName evidence="1">GTP:molybdopterin guanylyltransferase</fullName>
    </alternativeName>
    <alternativeName>
        <fullName evidence="1">Mo-MPT guanylyltransferase</fullName>
    </alternativeName>
    <alternativeName>
        <fullName evidence="1">Molybdopterin guanylyltransferase</fullName>
    </alternativeName>
    <alternativeName>
        <fullName evidence="1">Molybdopterin-guanine dinucleotide synthase</fullName>
        <shortName evidence="1">MGD synthase</shortName>
    </alternativeName>
</protein>
<dbReference type="EC" id="2.7.7.77" evidence="1"/>
<dbReference type="EMBL" id="CP000312">
    <property type="protein sequence ID" value="ABG86621.1"/>
    <property type="molecule type" value="Genomic_DNA"/>
</dbReference>
<dbReference type="RefSeq" id="WP_011592667.1">
    <property type="nucleotide sequence ID" value="NC_008262.1"/>
</dbReference>
<dbReference type="SMR" id="Q0SS30"/>
<dbReference type="KEGG" id="cpr:CPR_1762"/>
<dbReference type="Proteomes" id="UP000001824">
    <property type="component" value="Chromosome"/>
</dbReference>
<dbReference type="GO" id="GO:0005737">
    <property type="term" value="C:cytoplasm"/>
    <property type="evidence" value="ECO:0007669"/>
    <property type="project" value="UniProtKB-SubCell"/>
</dbReference>
<dbReference type="GO" id="GO:0005525">
    <property type="term" value="F:GTP binding"/>
    <property type="evidence" value="ECO:0007669"/>
    <property type="project" value="UniProtKB-UniRule"/>
</dbReference>
<dbReference type="GO" id="GO:0046872">
    <property type="term" value="F:metal ion binding"/>
    <property type="evidence" value="ECO:0007669"/>
    <property type="project" value="UniProtKB-KW"/>
</dbReference>
<dbReference type="GO" id="GO:0061603">
    <property type="term" value="F:molybdenum cofactor guanylyltransferase activity"/>
    <property type="evidence" value="ECO:0007669"/>
    <property type="project" value="UniProtKB-EC"/>
</dbReference>
<dbReference type="GO" id="GO:0006777">
    <property type="term" value="P:Mo-molybdopterin cofactor biosynthetic process"/>
    <property type="evidence" value="ECO:0007669"/>
    <property type="project" value="UniProtKB-KW"/>
</dbReference>
<dbReference type="CDD" id="cd02503">
    <property type="entry name" value="MobA"/>
    <property type="match status" value="1"/>
</dbReference>
<dbReference type="Gene3D" id="3.90.550.10">
    <property type="entry name" value="Spore Coat Polysaccharide Biosynthesis Protein SpsA, Chain A"/>
    <property type="match status" value="1"/>
</dbReference>
<dbReference type="HAMAP" id="MF_00316">
    <property type="entry name" value="MobA"/>
    <property type="match status" value="1"/>
</dbReference>
<dbReference type="InterPro" id="IPR025877">
    <property type="entry name" value="MobA-like_NTP_Trfase"/>
</dbReference>
<dbReference type="InterPro" id="IPR013482">
    <property type="entry name" value="Molybde_CF_guanTrfase"/>
</dbReference>
<dbReference type="InterPro" id="IPR029044">
    <property type="entry name" value="Nucleotide-diphossugar_trans"/>
</dbReference>
<dbReference type="PANTHER" id="PTHR19136">
    <property type="entry name" value="MOLYBDENUM COFACTOR GUANYLYLTRANSFERASE"/>
    <property type="match status" value="1"/>
</dbReference>
<dbReference type="PANTHER" id="PTHR19136:SF81">
    <property type="entry name" value="MOLYBDENUM COFACTOR GUANYLYLTRANSFERASE"/>
    <property type="match status" value="1"/>
</dbReference>
<dbReference type="Pfam" id="PF12804">
    <property type="entry name" value="NTP_transf_3"/>
    <property type="match status" value="1"/>
</dbReference>
<dbReference type="SUPFAM" id="SSF53448">
    <property type="entry name" value="Nucleotide-diphospho-sugar transferases"/>
    <property type="match status" value="1"/>
</dbReference>
<comment type="function">
    <text evidence="1">Transfers a GMP moiety from GTP to Mo-molybdopterin (Mo-MPT) cofactor (Moco or molybdenum cofactor) to form Mo-molybdopterin guanine dinucleotide (Mo-MGD) cofactor.</text>
</comment>
<comment type="catalytic activity">
    <reaction evidence="1">
        <text>Mo-molybdopterin + GTP + H(+) = Mo-molybdopterin guanine dinucleotide + diphosphate</text>
        <dbReference type="Rhea" id="RHEA:34243"/>
        <dbReference type="ChEBI" id="CHEBI:15378"/>
        <dbReference type="ChEBI" id="CHEBI:33019"/>
        <dbReference type="ChEBI" id="CHEBI:37565"/>
        <dbReference type="ChEBI" id="CHEBI:71302"/>
        <dbReference type="ChEBI" id="CHEBI:71310"/>
        <dbReference type="EC" id="2.7.7.77"/>
    </reaction>
</comment>
<comment type="cofactor">
    <cofactor evidence="1">
        <name>Mg(2+)</name>
        <dbReference type="ChEBI" id="CHEBI:18420"/>
    </cofactor>
</comment>
<comment type="subcellular location">
    <subcellularLocation>
        <location evidence="1">Cytoplasm</location>
    </subcellularLocation>
</comment>
<comment type="domain">
    <text evidence="1">The N-terminal domain determines nucleotide recognition and specific binding, while the C-terminal domain determines the specific binding to the target protein.</text>
</comment>
<comment type="similarity">
    <text evidence="1">Belongs to the MobA family.</text>
</comment>
<sequence>MIKKSAAILAGGKSSRMNYINKAFLKYEENYFIERIIKALEDYEEIIIISNNPEEYTEFGLKVFKDIYPSQGPLSGIHSALNYIKNDYCLVVACDMPFINKEVVNYLGNIKEDYEILIPKFQERLQPLCAIYKKSCKDIMEKELINNSNKLIKTCFKFSMKVVEEFPFIEKIHKKEIKNFYNINTVHEYEDLIRKKEI</sequence>
<feature type="chain" id="PRO_1000019118" description="Probable molybdenum cofactor guanylyltransferase">
    <location>
        <begin position="1"/>
        <end position="198"/>
    </location>
</feature>
<feature type="binding site" evidence="1">
    <location>
        <begin position="9"/>
        <end position="11"/>
    </location>
    <ligand>
        <name>GTP</name>
        <dbReference type="ChEBI" id="CHEBI:37565"/>
    </ligand>
</feature>
<feature type="binding site" evidence="1">
    <location>
        <position position="22"/>
    </location>
    <ligand>
        <name>GTP</name>
        <dbReference type="ChEBI" id="CHEBI:37565"/>
    </ligand>
</feature>
<feature type="binding site" evidence="1">
    <location>
        <position position="66"/>
    </location>
    <ligand>
        <name>GTP</name>
        <dbReference type="ChEBI" id="CHEBI:37565"/>
    </ligand>
</feature>
<feature type="binding site" evidence="1">
    <location>
        <position position="95"/>
    </location>
    <ligand>
        <name>GTP</name>
        <dbReference type="ChEBI" id="CHEBI:37565"/>
    </ligand>
</feature>
<feature type="binding site" evidence="1">
    <location>
        <position position="95"/>
    </location>
    <ligand>
        <name>Mg(2+)</name>
        <dbReference type="ChEBI" id="CHEBI:18420"/>
    </ligand>
</feature>
<name>MOBA_CLOPS</name>
<evidence type="ECO:0000255" key="1">
    <source>
        <dbReference type="HAMAP-Rule" id="MF_00316"/>
    </source>
</evidence>
<gene>
    <name evidence="1" type="primary">mobA</name>
    <name type="ordered locus">CPR_1762</name>
</gene>
<accession>Q0SS30</accession>
<keyword id="KW-0963">Cytoplasm</keyword>
<keyword id="KW-0342">GTP-binding</keyword>
<keyword id="KW-0460">Magnesium</keyword>
<keyword id="KW-0479">Metal-binding</keyword>
<keyword id="KW-0501">Molybdenum cofactor biosynthesis</keyword>
<keyword id="KW-0547">Nucleotide-binding</keyword>
<keyword id="KW-0808">Transferase</keyword>
<reference key="1">
    <citation type="journal article" date="2006" name="Genome Res.">
        <title>Skewed genomic variability in strains of the toxigenic bacterial pathogen, Clostridium perfringens.</title>
        <authorList>
            <person name="Myers G.S.A."/>
            <person name="Rasko D.A."/>
            <person name="Cheung J.K."/>
            <person name="Ravel J."/>
            <person name="Seshadri R."/>
            <person name="DeBoy R.T."/>
            <person name="Ren Q."/>
            <person name="Varga J."/>
            <person name="Awad M.M."/>
            <person name="Brinkac L.M."/>
            <person name="Daugherty S.C."/>
            <person name="Haft D.H."/>
            <person name="Dodson R.J."/>
            <person name="Madupu R."/>
            <person name="Nelson W.C."/>
            <person name="Rosovitz M.J."/>
            <person name="Sullivan S.A."/>
            <person name="Khouri H."/>
            <person name="Dimitrov G.I."/>
            <person name="Watkins K.L."/>
            <person name="Mulligan S."/>
            <person name="Benton J."/>
            <person name="Radune D."/>
            <person name="Fisher D.J."/>
            <person name="Atkins H.S."/>
            <person name="Hiscox T."/>
            <person name="Jost B.H."/>
            <person name="Billington S.J."/>
            <person name="Songer J.G."/>
            <person name="McClane B.A."/>
            <person name="Titball R.W."/>
            <person name="Rood J.I."/>
            <person name="Melville S.B."/>
            <person name="Paulsen I.T."/>
        </authorList>
    </citation>
    <scope>NUCLEOTIDE SEQUENCE [LARGE SCALE GENOMIC DNA]</scope>
    <source>
        <strain>SM101 / Type A</strain>
    </source>
</reference>
<organism>
    <name type="scientific">Clostridium perfringens (strain SM101 / Type A)</name>
    <dbReference type="NCBI Taxonomy" id="289380"/>
    <lineage>
        <taxon>Bacteria</taxon>
        <taxon>Bacillati</taxon>
        <taxon>Bacillota</taxon>
        <taxon>Clostridia</taxon>
        <taxon>Eubacteriales</taxon>
        <taxon>Clostridiaceae</taxon>
        <taxon>Clostridium</taxon>
    </lineage>
</organism>